<reference key="1">
    <citation type="submission" date="2007-03" db="EMBL/GenBank/DDBJ databases">
        <title>Sequence analysis of Arabidopsis pumila JS2 chloroplast DNA.</title>
        <authorList>
            <person name="Hosouchi T."/>
            <person name="Tsuruoka H."/>
            <person name="Kotani H."/>
        </authorList>
    </citation>
    <scope>NUCLEOTIDE SEQUENCE [LARGE SCALE GENOMIC DNA]</scope>
</reference>
<evidence type="ECO:0000255" key="1">
    <source>
        <dbReference type="HAMAP-Rule" id="MF_01323"/>
    </source>
</evidence>
<accession>A4QJS4</accession>
<proteinExistence type="inferred from homology"/>
<protein>
    <recommendedName>
        <fullName evidence="1">DNA-directed RNA polymerase subunit beta'</fullName>
        <ecNumber evidence="1">2.7.7.6</ecNumber>
    </recommendedName>
    <alternativeName>
        <fullName evidence="1">PEP</fullName>
    </alternativeName>
    <alternativeName>
        <fullName evidence="1">Plastid-encoded RNA polymerase subunit beta'</fullName>
        <shortName evidence="1">RNA polymerase subunit beta'</shortName>
    </alternativeName>
</protein>
<keyword id="KW-0150">Chloroplast</keyword>
<keyword id="KW-0240">DNA-directed RNA polymerase</keyword>
<keyword id="KW-0460">Magnesium</keyword>
<keyword id="KW-0479">Metal-binding</keyword>
<keyword id="KW-0548">Nucleotidyltransferase</keyword>
<keyword id="KW-0934">Plastid</keyword>
<keyword id="KW-0804">Transcription</keyword>
<keyword id="KW-0808">Transferase</keyword>
<keyword id="KW-0862">Zinc</keyword>
<organism>
    <name type="scientific">Olimarabidopsis pumila</name>
    <name type="common">Dwarf rocket</name>
    <name type="synonym">Arabidopsis griffithiana</name>
    <dbReference type="NCBI Taxonomy" id="74718"/>
    <lineage>
        <taxon>Eukaryota</taxon>
        <taxon>Viridiplantae</taxon>
        <taxon>Streptophyta</taxon>
        <taxon>Embryophyta</taxon>
        <taxon>Tracheophyta</taxon>
        <taxon>Spermatophyta</taxon>
        <taxon>Magnoliopsida</taxon>
        <taxon>eudicotyledons</taxon>
        <taxon>Gunneridae</taxon>
        <taxon>Pentapetalae</taxon>
        <taxon>rosids</taxon>
        <taxon>malvids</taxon>
        <taxon>Brassicales</taxon>
        <taxon>Brassicaceae</taxon>
        <taxon>Alyssopsideae</taxon>
        <taxon>Olimarabidopsis</taxon>
    </lineage>
</organism>
<feature type="chain" id="PRO_0000353508" description="DNA-directed RNA polymerase subunit beta'">
    <location>
        <begin position="1"/>
        <end position="680"/>
    </location>
</feature>
<feature type="binding site" evidence="1">
    <location>
        <position position="69"/>
    </location>
    <ligand>
        <name>Zn(2+)</name>
        <dbReference type="ChEBI" id="CHEBI:29105"/>
    </ligand>
</feature>
<feature type="binding site" evidence="1">
    <location>
        <position position="71"/>
    </location>
    <ligand>
        <name>Zn(2+)</name>
        <dbReference type="ChEBI" id="CHEBI:29105"/>
    </ligand>
</feature>
<feature type="binding site" evidence="1">
    <location>
        <position position="87"/>
    </location>
    <ligand>
        <name>Zn(2+)</name>
        <dbReference type="ChEBI" id="CHEBI:29105"/>
    </ligand>
</feature>
<feature type="binding site" evidence="1">
    <location>
        <position position="90"/>
    </location>
    <ligand>
        <name>Zn(2+)</name>
        <dbReference type="ChEBI" id="CHEBI:29105"/>
    </ligand>
</feature>
<feature type="binding site" evidence="1">
    <location>
        <position position="489"/>
    </location>
    <ligand>
        <name>Mg(2+)</name>
        <dbReference type="ChEBI" id="CHEBI:18420"/>
    </ligand>
</feature>
<feature type="binding site" evidence="1">
    <location>
        <position position="491"/>
    </location>
    <ligand>
        <name>Mg(2+)</name>
        <dbReference type="ChEBI" id="CHEBI:18420"/>
    </ligand>
</feature>
<feature type="binding site" evidence="1">
    <location>
        <position position="493"/>
    </location>
    <ligand>
        <name>Mg(2+)</name>
        <dbReference type="ChEBI" id="CHEBI:18420"/>
    </ligand>
</feature>
<geneLocation type="chloroplast"/>
<sequence length="680" mass="78478">MIDRYKHQQLRIGLVSPQQISAWATKIIPNGEIVGEVTKPYTFHYKTNKPEKDGLFCERIFGPIKSGICACGNYRVIGDEKEDPKFCEQCGVEFVDSRIRRYQMGYIKLTCPVTHVWYLKRLPSYIANLLDKPLKELEGLVYCDFSFARPITKKPTFLRLRGSFEYEIQSWKYSIPLFFTTQGFDIFRNREISTGAGAIREQLADLDLRIIIENSLVEWKQLGEEGPTGNEWEDRKIVRRKDFLVRRMELAKHFIRTNIEPEWMVLCLLPVLPPELRPIIQIEGGKLMSSDINELYRRVIYRNNTLTDLLTTSRSTPGELVMCQEKLVQEAVDTLLDNGIRGQPMRDGHNKVYKSFSDVIEGKEGRFRETLLGKRVDYSGRSVIVVGPSLSLHRCGLPREIAIELFQTFVIRGLIRQHLASNIGVAKSQIREKKPIVWEILQEVMQGHPVLLNRAPTLHRLGIQSFQPILVEGRTICLHPLVCKGFNADFDGDQMAVHVPLSLEAQAEARLLMFSHMNLLSPAIGDPISVPTQDMLIGLYVLTSGTRRGICANRYNPCNRKNYQNERISETNYKYTKEPFFCNSYDAIGAYRQKRINLDSPLWLRWQLDQRVIASREVPIEVHYESFGNYHEIYAHYLIVRSVKKETFCIYIRTTVGHISFYREIEEAIQGFSQACSYAT</sequence>
<dbReference type="EC" id="2.7.7.6" evidence="1"/>
<dbReference type="EMBL" id="AP009368">
    <property type="protein sequence ID" value="BAF49930.1"/>
    <property type="molecule type" value="Genomic_DNA"/>
</dbReference>
<dbReference type="RefSeq" id="YP_001123106.1">
    <property type="nucleotide sequence ID" value="NC_009267.1"/>
</dbReference>
<dbReference type="SMR" id="A4QJS4"/>
<dbReference type="GeneID" id="4962392"/>
<dbReference type="GO" id="GO:0009507">
    <property type="term" value="C:chloroplast"/>
    <property type="evidence" value="ECO:0007669"/>
    <property type="project" value="UniProtKB-SubCell"/>
</dbReference>
<dbReference type="GO" id="GO:0000428">
    <property type="term" value="C:DNA-directed RNA polymerase complex"/>
    <property type="evidence" value="ECO:0007669"/>
    <property type="project" value="UniProtKB-KW"/>
</dbReference>
<dbReference type="GO" id="GO:0005739">
    <property type="term" value="C:mitochondrion"/>
    <property type="evidence" value="ECO:0007669"/>
    <property type="project" value="GOC"/>
</dbReference>
<dbReference type="GO" id="GO:0003677">
    <property type="term" value="F:DNA binding"/>
    <property type="evidence" value="ECO:0007669"/>
    <property type="project" value="UniProtKB-UniRule"/>
</dbReference>
<dbReference type="GO" id="GO:0003899">
    <property type="term" value="F:DNA-directed RNA polymerase activity"/>
    <property type="evidence" value="ECO:0007669"/>
    <property type="project" value="UniProtKB-UniRule"/>
</dbReference>
<dbReference type="GO" id="GO:0000287">
    <property type="term" value="F:magnesium ion binding"/>
    <property type="evidence" value="ECO:0007669"/>
    <property type="project" value="UniProtKB-UniRule"/>
</dbReference>
<dbReference type="GO" id="GO:0008270">
    <property type="term" value="F:zinc ion binding"/>
    <property type="evidence" value="ECO:0007669"/>
    <property type="project" value="UniProtKB-UniRule"/>
</dbReference>
<dbReference type="GO" id="GO:0006351">
    <property type="term" value="P:DNA-templated transcription"/>
    <property type="evidence" value="ECO:0007669"/>
    <property type="project" value="UniProtKB-UniRule"/>
</dbReference>
<dbReference type="FunFam" id="1.10.40.90:FF:000002">
    <property type="entry name" value="DNA-directed RNA polymerase subunit"/>
    <property type="match status" value="1"/>
</dbReference>
<dbReference type="FunFam" id="4.10.860.120:FF:000007">
    <property type="entry name" value="DNA-directed RNA polymerase subunit gamma"/>
    <property type="match status" value="1"/>
</dbReference>
<dbReference type="Gene3D" id="1.10.40.90">
    <property type="match status" value="1"/>
</dbReference>
<dbReference type="Gene3D" id="2.40.40.20">
    <property type="match status" value="1"/>
</dbReference>
<dbReference type="Gene3D" id="4.10.860.120">
    <property type="entry name" value="RNA polymerase II, clamp domain"/>
    <property type="match status" value="1"/>
</dbReference>
<dbReference type="Gene3D" id="1.10.274.100">
    <property type="entry name" value="RNA polymerase Rpb1, domain 3"/>
    <property type="match status" value="1"/>
</dbReference>
<dbReference type="HAMAP" id="MF_01323">
    <property type="entry name" value="RNApol_bact_RpoC1"/>
    <property type="match status" value="1"/>
</dbReference>
<dbReference type="InterPro" id="IPR045867">
    <property type="entry name" value="DNA-dir_RpoC_beta_prime"/>
</dbReference>
<dbReference type="InterPro" id="IPR000722">
    <property type="entry name" value="RNA_pol_asu"/>
</dbReference>
<dbReference type="InterPro" id="IPR006592">
    <property type="entry name" value="RNA_pol_N"/>
</dbReference>
<dbReference type="InterPro" id="IPR007080">
    <property type="entry name" value="RNA_pol_Rpb1_1"/>
</dbReference>
<dbReference type="InterPro" id="IPR042102">
    <property type="entry name" value="RNA_pol_Rpb1_3_sf"/>
</dbReference>
<dbReference type="InterPro" id="IPR044893">
    <property type="entry name" value="RNA_pol_Rpb1_clamp_domain"/>
</dbReference>
<dbReference type="InterPro" id="IPR034678">
    <property type="entry name" value="RNApol_RpoC1"/>
</dbReference>
<dbReference type="PANTHER" id="PTHR19376">
    <property type="entry name" value="DNA-DIRECTED RNA POLYMERASE"/>
    <property type="match status" value="1"/>
</dbReference>
<dbReference type="PANTHER" id="PTHR19376:SF54">
    <property type="entry name" value="DNA-DIRECTED RNA POLYMERASE SUBUNIT BETA"/>
    <property type="match status" value="1"/>
</dbReference>
<dbReference type="Pfam" id="PF04997">
    <property type="entry name" value="RNA_pol_Rpb1_1"/>
    <property type="match status" value="1"/>
</dbReference>
<dbReference type="Pfam" id="PF00623">
    <property type="entry name" value="RNA_pol_Rpb1_2"/>
    <property type="match status" value="2"/>
</dbReference>
<dbReference type="SMART" id="SM00663">
    <property type="entry name" value="RPOLA_N"/>
    <property type="match status" value="1"/>
</dbReference>
<dbReference type="SUPFAM" id="SSF64484">
    <property type="entry name" value="beta and beta-prime subunits of DNA dependent RNA-polymerase"/>
    <property type="match status" value="1"/>
</dbReference>
<comment type="function">
    <text evidence="1">DNA-dependent RNA polymerase catalyzes the transcription of DNA into RNA using the four ribonucleoside triphosphates as substrates.</text>
</comment>
<comment type="catalytic activity">
    <reaction evidence="1">
        <text>RNA(n) + a ribonucleoside 5'-triphosphate = RNA(n+1) + diphosphate</text>
        <dbReference type="Rhea" id="RHEA:21248"/>
        <dbReference type="Rhea" id="RHEA-COMP:14527"/>
        <dbReference type="Rhea" id="RHEA-COMP:17342"/>
        <dbReference type="ChEBI" id="CHEBI:33019"/>
        <dbReference type="ChEBI" id="CHEBI:61557"/>
        <dbReference type="ChEBI" id="CHEBI:140395"/>
        <dbReference type="EC" id="2.7.7.6"/>
    </reaction>
</comment>
<comment type="cofactor">
    <cofactor evidence="1">
        <name>Mg(2+)</name>
        <dbReference type="ChEBI" id="CHEBI:18420"/>
    </cofactor>
    <text evidence="1">Binds 1 Mg(2+) ion per subunit.</text>
</comment>
<comment type="cofactor">
    <cofactor evidence="1">
        <name>Zn(2+)</name>
        <dbReference type="ChEBI" id="CHEBI:29105"/>
    </cofactor>
    <text evidence="1">Binds 1 Zn(2+) ion per subunit.</text>
</comment>
<comment type="subunit">
    <text evidence="1">In plastids the minimal PEP RNA polymerase catalytic core is composed of four subunits: alpha, beta, beta', and beta''. When a (nuclear-encoded) sigma factor is associated with the core the holoenzyme is formed, which can initiate transcription.</text>
</comment>
<comment type="subcellular location">
    <subcellularLocation>
        <location evidence="1">Plastid</location>
        <location evidence="1">Chloroplast</location>
    </subcellularLocation>
</comment>
<comment type="similarity">
    <text evidence="1">Belongs to the RNA polymerase beta' chain family. RpoC1 subfamily.</text>
</comment>
<name>RPOC1_OLIPU</name>
<gene>
    <name evidence="1" type="primary">rpoC1</name>
</gene>